<organism>
    <name type="scientific">Campylobacter lari (strain RM2100 / D67 / ATCC BAA-1060)</name>
    <dbReference type="NCBI Taxonomy" id="306263"/>
    <lineage>
        <taxon>Bacteria</taxon>
        <taxon>Pseudomonadati</taxon>
        <taxon>Campylobacterota</taxon>
        <taxon>Epsilonproteobacteria</taxon>
        <taxon>Campylobacterales</taxon>
        <taxon>Campylobacteraceae</taxon>
        <taxon>Campylobacter</taxon>
    </lineage>
</organism>
<accession>B9KEB2</accession>
<reference key="1">
    <citation type="journal article" date="2008" name="Foodborne Pathog. Dis.">
        <title>The complete genome sequence and analysis of the human pathogen Campylobacter lari.</title>
        <authorList>
            <person name="Miller W.G."/>
            <person name="Wang G."/>
            <person name="Binnewies T.T."/>
            <person name="Parker C.T."/>
        </authorList>
    </citation>
    <scope>NUCLEOTIDE SEQUENCE [LARGE SCALE GENOMIC DNA]</scope>
    <source>
        <strain>RM2100 / D67 / ATCC BAA-1060</strain>
    </source>
</reference>
<evidence type="ECO:0000255" key="1">
    <source>
        <dbReference type="HAMAP-Rule" id="MF_00080"/>
    </source>
</evidence>
<comment type="function">
    <text evidence="1">IF-3 binds to the 30S ribosomal subunit and shifts the equilibrium between 70S ribosomes and their 50S and 30S subunits in favor of the free subunits, thus enhancing the availability of 30S subunits on which protein synthesis initiation begins.</text>
</comment>
<comment type="subunit">
    <text evidence="1">Monomer.</text>
</comment>
<comment type="subcellular location">
    <subcellularLocation>
        <location evidence="1">Cytoplasm</location>
    </subcellularLocation>
</comment>
<comment type="similarity">
    <text evidence="1">Belongs to the IF-3 family.</text>
</comment>
<keyword id="KW-0963">Cytoplasm</keyword>
<keyword id="KW-0396">Initiation factor</keyword>
<keyword id="KW-0648">Protein biosynthesis</keyword>
<keyword id="KW-1185">Reference proteome</keyword>
<sequence>MSKEKEVLLNDEIQADEIRCIGDDGKVYGIISSDEALDIANRLGLDLVMIAPEAKPPVCKIMDYGKFRYQQEKKQKEAKKKQKVIDIKEIKLSVKIAQNDINYKVKHASEFLEQGKHVKFRVFLKGREMGSPEAGVALLEKIWQMVEDIADRDKEPLLEGRYVNMLVTPKKKK</sequence>
<proteinExistence type="inferred from homology"/>
<dbReference type="EMBL" id="CP000932">
    <property type="protein sequence ID" value="ACM63397.1"/>
    <property type="molecule type" value="Genomic_DNA"/>
</dbReference>
<dbReference type="RefSeq" id="WP_012660783.1">
    <property type="nucleotide sequence ID" value="NC_012039.1"/>
</dbReference>
<dbReference type="SMR" id="B9KEB2"/>
<dbReference type="STRING" id="306263.Cla_0029"/>
<dbReference type="KEGG" id="cla:CLA_0029"/>
<dbReference type="PATRIC" id="fig|306263.5.peg.30"/>
<dbReference type="eggNOG" id="COG0290">
    <property type="taxonomic scope" value="Bacteria"/>
</dbReference>
<dbReference type="HOGENOM" id="CLU_054919_3_2_7"/>
<dbReference type="Proteomes" id="UP000007727">
    <property type="component" value="Chromosome"/>
</dbReference>
<dbReference type="GO" id="GO:0005829">
    <property type="term" value="C:cytosol"/>
    <property type="evidence" value="ECO:0007669"/>
    <property type="project" value="TreeGrafter"/>
</dbReference>
<dbReference type="GO" id="GO:0016020">
    <property type="term" value="C:membrane"/>
    <property type="evidence" value="ECO:0007669"/>
    <property type="project" value="TreeGrafter"/>
</dbReference>
<dbReference type="GO" id="GO:0043022">
    <property type="term" value="F:ribosome binding"/>
    <property type="evidence" value="ECO:0007669"/>
    <property type="project" value="TreeGrafter"/>
</dbReference>
<dbReference type="GO" id="GO:0003743">
    <property type="term" value="F:translation initiation factor activity"/>
    <property type="evidence" value="ECO:0007669"/>
    <property type="project" value="UniProtKB-UniRule"/>
</dbReference>
<dbReference type="GO" id="GO:0032790">
    <property type="term" value="P:ribosome disassembly"/>
    <property type="evidence" value="ECO:0007669"/>
    <property type="project" value="TreeGrafter"/>
</dbReference>
<dbReference type="FunFam" id="3.10.20.80:FF:000001">
    <property type="entry name" value="Translation initiation factor IF-3"/>
    <property type="match status" value="1"/>
</dbReference>
<dbReference type="Gene3D" id="3.30.110.10">
    <property type="entry name" value="Translation initiation factor 3 (IF-3), C-terminal domain"/>
    <property type="match status" value="1"/>
</dbReference>
<dbReference type="Gene3D" id="3.10.20.80">
    <property type="entry name" value="Translation initiation factor 3 (IF-3), N-terminal domain"/>
    <property type="match status" value="1"/>
</dbReference>
<dbReference type="HAMAP" id="MF_00080">
    <property type="entry name" value="IF_3"/>
    <property type="match status" value="1"/>
</dbReference>
<dbReference type="InterPro" id="IPR036788">
    <property type="entry name" value="T_IF-3_C_sf"/>
</dbReference>
<dbReference type="InterPro" id="IPR036787">
    <property type="entry name" value="T_IF-3_N_sf"/>
</dbReference>
<dbReference type="InterPro" id="IPR019813">
    <property type="entry name" value="Translation_initiation_fac3_CS"/>
</dbReference>
<dbReference type="InterPro" id="IPR001288">
    <property type="entry name" value="Translation_initiation_fac_3"/>
</dbReference>
<dbReference type="InterPro" id="IPR019815">
    <property type="entry name" value="Translation_initiation_fac_3_C"/>
</dbReference>
<dbReference type="InterPro" id="IPR019814">
    <property type="entry name" value="Translation_initiation_fac_3_N"/>
</dbReference>
<dbReference type="NCBIfam" id="TIGR00168">
    <property type="entry name" value="infC"/>
    <property type="match status" value="1"/>
</dbReference>
<dbReference type="PANTHER" id="PTHR10938">
    <property type="entry name" value="TRANSLATION INITIATION FACTOR IF-3"/>
    <property type="match status" value="1"/>
</dbReference>
<dbReference type="PANTHER" id="PTHR10938:SF0">
    <property type="entry name" value="TRANSLATION INITIATION FACTOR IF-3, MITOCHONDRIAL"/>
    <property type="match status" value="1"/>
</dbReference>
<dbReference type="Pfam" id="PF00707">
    <property type="entry name" value="IF3_C"/>
    <property type="match status" value="1"/>
</dbReference>
<dbReference type="Pfam" id="PF05198">
    <property type="entry name" value="IF3_N"/>
    <property type="match status" value="1"/>
</dbReference>
<dbReference type="SUPFAM" id="SSF55200">
    <property type="entry name" value="Translation initiation factor IF3, C-terminal domain"/>
    <property type="match status" value="1"/>
</dbReference>
<dbReference type="SUPFAM" id="SSF54364">
    <property type="entry name" value="Translation initiation factor IF3, N-terminal domain"/>
    <property type="match status" value="1"/>
</dbReference>
<dbReference type="PROSITE" id="PS00938">
    <property type="entry name" value="IF3"/>
    <property type="match status" value="1"/>
</dbReference>
<name>IF3_CAMLR</name>
<gene>
    <name evidence="1" type="primary">infC</name>
    <name type="ordered locus">Cla_0029</name>
</gene>
<feature type="chain" id="PRO_1000118264" description="Translation initiation factor IF-3">
    <location>
        <begin position="1"/>
        <end position="173"/>
    </location>
</feature>
<protein>
    <recommendedName>
        <fullName evidence="1">Translation initiation factor IF-3</fullName>
    </recommendedName>
</protein>